<feature type="chain" id="PRO_0000091738" description="3-hydroxyacyl-[acyl-carrier-protein] dehydratase FabZ">
    <location>
        <begin position="1"/>
        <end position="140"/>
    </location>
</feature>
<feature type="active site" evidence="1">
    <location>
        <position position="47"/>
    </location>
</feature>
<proteinExistence type="inferred from homology"/>
<comment type="function">
    <text evidence="1">Involved in unsaturated fatty acids biosynthesis. Catalyzes the dehydration of short chain beta-hydroxyacyl-ACPs and long chain saturated and unsaturated beta-hydroxyacyl-ACPs.</text>
</comment>
<comment type="catalytic activity">
    <reaction evidence="1">
        <text>a (3R)-hydroxyacyl-[ACP] = a (2E)-enoyl-[ACP] + H2O</text>
        <dbReference type="Rhea" id="RHEA:13097"/>
        <dbReference type="Rhea" id="RHEA-COMP:9925"/>
        <dbReference type="Rhea" id="RHEA-COMP:9945"/>
        <dbReference type="ChEBI" id="CHEBI:15377"/>
        <dbReference type="ChEBI" id="CHEBI:78784"/>
        <dbReference type="ChEBI" id="CHEBI:78827"/>
        <dbReference type="EC" id="4.2.1.59"/>
    </reaction>
</comment>
<comment type="subcellular location">
    <subcellularLocation>
        <location evidence="1">Cytoplasm</location>
    </subcellularLocation>
</comment>
<comment type="similarity">
    <text evidence="1">Belongs to the thioester dehydratase family. FabZ subfamily.</text>
</comment>
<sequence length="140" mass="15445">MIDIKEIREALPHRYPMLLVDRVLEVSEDEIVAIKNVSINEPFFNGHFPEYPVMPGVLIMEALAQTAGVLELSKEENKGKLVFYAGMDKVKFKKQVVPGDQLVMTAKFVKRRGTIAVVEAIAEVDGKLAASGTLTFAIGN</sequence>
<name>FABZ_STRA3</name>
<accession>Q8E720</accession>
<reference key="1">
    <citation type="journal article" date="2002" name="Mol. Microbiol.">
        <title>Genome sequence of Streptococcus agalactiae, a pathogen causing invasive neonatal disease.</title>
        <authorList>
            <person name="Glaser P."/>
            <person name="Rusniok C."/>
            <person name="Buchrieser C."/>
            <person name="Chevalier F."/>
            <person name="Frangeul L."/>
            <person name="Msadek T."/>
            <person name="Zouine M."/>
            <person name="Couve E."/>
            <person name="Lalioui L."/>
            <person name="Poyart C."/>
            <person name="Trieu-Cuot P."/>
            <person name="Kunst F."/>
        </authorList>
    </citation>
    <scope>NUCLEOTIDE SEQUENCE [LARGE SCALE GENOMIC DNA]</scope>
    <source>
        <strain>NEM316</strain>
    </source>
</reference>
<keyword id="KW-0963">Cytoplasm</keyword>
<keyword id="KW-0441">Lipid A biosynthesis</keyword>
<keyword id="KW-0444">Lipid biosynthesis</keyword>
<keyword id="KW-0443">Lipid metabolism</keyword>
<keyword id="KW-0456">Lyase</keyword>
<organism>
    <name type="scientific">Streptococcus agalactiae serotype III (strain NEM316)</name>
    <dbReference type="NCBI Taxonomy" id="211110"/>
    <lineage>
        <taxon>Bacteria</taxon>
        <taxon>Bacillati</taxon>
        <taxon>Bacillota</taxon>
        <taxon>Bacilli</taxon>
        <taxon>Lactobacillales</taxon>
        <taxon>Streptococcaceae</taxon>
        <taxon>Streptococcus</taxon>
    </lineage>
</organism>
<protein>
    <recommendedName>
        <fullName evidence="1">3-hydroxyacyl-[acyl-carrier-protein] dehydratase FabZ</fullName>
        <ecNumber evidence="1">4.2.1.59</ecNumber>
    </recommendedName>
    <alternativeName>
        <fullName evidence="1">(3R)-hydroxymyristoyl-[acyl-carrier-protein] dehydratase</fullName>
        <shortName evidence="1">(3R)-hydroxymyristoyl-ACP dehydrase</shortName>
    </alternativeName>
    <alternativeName>
        <fullName evidence="1">Beta-hydroxyacyl-ACP dehydratase</fullName>
    </alternativeName>
</protein>
<dbReference type="EC" id="4.2.1.59" evidence="1"/>
<dbReference type="EMBL" id="AL766844">
    <property type="protein sequence ID" value="CAD45983.1"/>
    <property type="molecule type" value="Genomic_DNA"/>
</dbReference>
<dbReference type="RefSeq" id="WP_000565430.1">
    <property type="nucleotide sequence ID" value="NC_004368.1"/>
</dbReference>
<dbReference type="SMR" id="Q8E720"/>
<dbReference type="GeneID" id="66885326"/>
<dbReference type="KEGG" id="san:gbs0338"/>
<dbReference type="eggNOG" id="COG0764">
    <property type="taxonomic scope" value="Bacteria"/>
</dbReference>
<dbReference type="HOGENOM" id="CLU_078912_1_2_9"/>
<dbReference type="Proteomes" id="UP000000823">
    <property type="component" value="Chromosome"/>
</dbReference>
<dbReference type="GO" id="GO:0005737">
    <property type="term" value="C:cytoplasm"/>
    <property type="evidence" value="ECO:0007669"/>
    <property type="project" value="UniProtKB-SubCell"/>
</dbReference>
<dbReference type="GO" id="GO:0016020">
    <property type="term" value="C:membrane"/>
    <property type="evidence" value="ECO:0007669"/>
    <property type="project" value="GOC"/>
</dbReference>
<dbReference type="GO" id="GO:0019171">
    <property type="term" value="F:(3R)-hydroxyacyl-[acyl-carrier-protein] dehydratase activity"/>
    <property type="evidence" value="ECO:0007669"/>
    <property type="project" value="UniProtKB-EC"/>
</dbReference>
<dbReference type="GO" id="GO:0006633">
    <property type="term" value="P:fatty acid biosynthetic process"/>
    <property type="evidence" value="ECO:0007669"/>
    <property type="project" value="UniProtKB-UniRule"/>
</dbReference>
<dbReference type="GO" id="GO:0009245">
    <property type="term" value="P:lipid A biosynthetic process"/>
    <property type="evidence" value="ECO:0007669"/>
    <property type="project" value="UniProtKB-UniRule"/>
</dbReference>
<dbReference type="CDD" id="cd01288">
    <property type="entry name" value="FabZ"/>
    <property type="match status" value="1"/>
</dbReference>
<dbReference type="FunFam" id="3.10.129.10:FF:000001">
    <property type="entry name" value="3-hydroxyacyl-[acyl-carrier-protein] dehydratase FabZ"/>
    <property type="match status" value="1"/>
</dbReference>
<dbReference type="Gene3D" id="3.10.129.10">
    <property type="entry name" value="Hotdog Thioesterase"/>
    <property type="match status" value="1"/>
</dbReference>
<dbReference type="HAMAP" id="MF_00406">
    <property type="entry name" value="FabZ"/>
    <property type="match status" value="1"/>
</dbReference>
<dbReference type="InterPro" id="IPR013114">
    <property type="entry name" value="FabA_FabZ"/>
</dbReference>
<dbReference type="InterPro" id="IPR010084">
    <property type="entry name" value="FabZ"/>
</dbReference>
<dbReference type="InterPro" id="IPR029069">
    <property type="entry name" value="HotDog_dom_sf"/>
</dbReference>
<dbReference type="NCBIfam" id="TIGR01750">
    <property type="entry name" value="fabZ"/>
    <property type="match status" value="1"/>
</dbReference>
<dbReference type="NCBIfam" id="NF000582">
    <property type="entry name" value="PRK00006.1"/>
    <property type="match status" value="1"/>
</dbReference>
<dbReference type="PANTHER" id="PTHR30272">
    <property type="entry name" value="3-HYDROXYACYL-[ACYL-CARRIER-PROTEIN] DEHYDRATASE"/>
    <property type="match status" value="1"/>
</dbReference>
<dbReference type="PANTHER" id="PTHR30272:SF1">
    <property type="entry name" value="3-HYDROXYACYL-[ACYL-CARRIER-PROTEIN] DEHYDRATASE"/>
    <property type="match status" value="1"/>
</dbReference>
<dbReference type="Pfam" id="PF07977">
    <property type="entry name" value="FabA"/>
    <property type="match status" value="1"/>
</dbReference>
<dbReference type="SUPFAM" id="SSF54637">
    <property type="entry name" value="Thioesterase/thiol ester dehydrase-isomerase"/>
    <property type="match status" value="1"/>
</dbReference>
<gene>
    <name evidence="1" type="primary">fabZ</name>
    <name type="ordered locus">gbs0338</name>
</gene>
<evidence type="ECO:0000255" key="1">
    <source>
        <dbReference type="HAMAP-Rule" id="MF_00406"/>
    </source>
</evidence>